<accession>A5VIX2</accession>
<sequence>MENDHGILSDHPSGEEESQVEITLRPQKLREYIGQPKIKHELEVYIKAAQSREEALDHVLLYGPPGLGKTTLAMVIANEMGVNIRTTSGPAIEKPGDLVALLNELKPGDVLFVDEIHRLPKVVEEMLYSAMEDYYIDIVIGEGPTAHPVHFPLPPFTLIGATTRAGMLSAPLRDRFGIVEHMNYYTQDELTKIIFRSAKIFHTSIQDEGAHELSLRSRGTPRIANRLLKRVRDFAQVAGKQSIDSAIVKQALSLLQVDDRGLDEIDRKMLLTMINFYHGGPVGLKTIAANIGEETNTIEEMYEPYLLQIGFISRTPRGRLVTPTAYEHLGIEYPTDKN</sequence>
<keyword id="KW-0067">ATP-binding</keyword>
<keyword id="KW-0963">Cytoplasm</keyword>
<keyword id="KW-0227">DNA damage</keyword>
<keyword id="KW-0233">DNA recombination</keyword>
<keyword id="KW-0234">DNA repair</keyword>
<keyword id="KW-0238">DNA-binding</keyword>
<keyword id="KW-0378">Hydrolase</keyword>
<keyword id="KW-0547">Nucleotide-binding</keyword>
<keyword id="KW-1185">Reference proteome</keyword>
<protein>
    <recommendedName>
        <fullName evidence="1">Holliday junction branch migration complex subunit RuvB</fullName>
        <ecNumber evidence="1">3.6.4.-</ecNumber>
    </recommendedName>
</protein>
<reference key="1">
    <citation type="journal article" date="2011" name="PLoS Genet.">
        <title>The evolution of host specialization in the vertebrate gut symbiont Lactobacillus reuteri.</title>
        <authorList>
            <person name="Frese S.A."/>
            <person name="Benson A.K."/>
            <person name="Tannock G.W."/>
            <person name="Loach D.M."/>
            <person name="Kim J."/>
            <person name="Zhang M."/>
            <person name="Oh P.L."/>
            <person name="Heng N.C."/>
            <person name="Patil P.B."/>
            <person name="Juge N."/>
            <person name="Mackenzie D.A."/>
            <person name="Pearson B.M."/>
            <person name="Lapidus A."/>
            <person name="Dalin E."/>
            <person name="Tice H."/>
            <person name="Goltsman E."/>
            <person name="Land M."/>
            <person name="Hauser L."/>
            <person name="Ivanova N."/>
            <person name="Kyrpides N.C."/>
            <person name="Walter J."/>
        </authorList>
    </citation>
    <scope>NUCLEOTIDE SEQUENCE [LARGE SCALE GENOMIC DNA]</scope>
    <source>
        <strain>DSM 20016</strain>
    </source>
</reference>
<comment type="function">
    <text evidence="1">The RuvA-RuvB-RuvC complex processes Holliday junction (HJ) DNA during genetic recombination and DNA repair, while the RuvA-RuvB complex plays an important role in the rescue of blocked DNA replication forks via replication fork reversal (RFR). RuvA specifically binds to HJ cruciform DNA, conferring on it an open structure. The RuvB hexamer acts as an ATP-dependent pump, pulling dsDNA into and through the RuvAB complex. RuvB forms 2 homohexamers on either side of HJ DNA bound by 1 or 2 RuvA tetramers; 4 subunits per hexamer contact DNA at a time. Coordinated motions by a converter formed by DNA-disengaged RuvB subunits stimulates ATP hydrolysis and nucleotide exchange. Immobilization of the converter enables RuvB to convert the ATP-contained energy into a lever motion, pulling 2 nucleotides of DNA out of the RuvA tetramer per ATP hydrolyzed, thus driving DNA branch migration. The RuvB motors rotate together with the DNA substrate, which together with the progressing nucleotide cycle form the mechanistic basis for DNA recombination by continuous HJ branch migration. Branch migration allows RuvC to scan DNA until it finds its consensus sequence, where it cleaves and resolves cruciform DNA.</text>
</comment>
<comment type="catalytic activity">
    <reaction evidence="1">
        <text>ATP + H2O = ADP + phosphate + H(+)</text>
        <dbReference type="Rhea" id="RHEA:13065"/>
        <dbReference type="ChEBI" id="CHEBI:15377"/>
        <dbReference type="ChEBI" id="CHEBI:15378"/>
        <dbReference type="ChEBI" id="CHEBI:30616"/>
        <dbReference type="ChEBI" id="CHEBI:43474"/>
        <dbReference type="ChEBI" id="CHEBI:456216"/>
    </reaction>
</comment>
<comment type="subunit">
    <text evidence="1">Homohexamer. Forms an RuvA(8)-RuvB(12)-Holliday junction (HJ) complex. HJ DNA is sandwiched between 2 RuvA tetramers; dsDNA enters through RuvA and exits via RuvB. An RuvB hexamer assembles on each DNA strand where it exits the tetramer. Each RuvB hexamer is contacted by two RuvA subunits (via domain III) on 2 adjacent RuvB subunits; this complex drives branch migration. In the full resolvosome a probable DNA-RuvA(4)-RuvB(12)-RuvC(2) complex forms which resolves the HJ.</text>
</comment>
<comment type="subcellular location">
    <subcellularLocation>
        <location evidence="1">Cytoplasm</location>
    </subcellularLocation>
</comment>
<comment type="domain">
    <text evidence="1">Has 3 domains, the large (RuvB-L) and small ATPase (RuvB-S) domains and the C-terminal head (RuvB-H) domain. The head domain binds DNA, while the ATPase domains jointly bind ATP, ADP or are empty depending on the state of the subunit in the translocation cycle. During a single DNA translocation step the structure of each domain remains the same, but their relative positions change.</text>
</comment>
<comment type="similarity">
    <text evidence="1">Belongs to the RuvB family.</text>
</comment>
<gene>
    <name evidence="1" type="primary">ruvB</name>
    <name type="ordered locus">Lreu_0528</name>
</gene>
<dbReference type="EC" id="3.6.4.-" evidence="1"/>
<dbReference type="EMBL" id="CP000705">
    <property type="protein sequence ID" value="ABQ82796.1"/>
    <property type="molecule type" value="Genomic_DNA"/>
</dbReference>
<dbReference type="RefSeq" id="WP_003667627.1">
    <property type="nucleotide sequence ID" value="NC_009513.1"/>
</dbReference>
<dbReference type="SMR" id="A5VIX2"/>
<dbReference type="STRING" id="557436.Lreu_0528"/>
<dbReference type="KEGG" id="lre:Lreu_0528"/>
<dbReference type="PATRIC" id="fig|557436.17.peg.1808"/>
<dbReference type="eggNOG" id="COG2255">
    <property type="taxonomic scope" value="Bacteria"/>
</dbReference>
<dbReference type="HOGENOM" id="CLU_055599_1_0_9"/>
<dbReference type="Proteomes" id="UP000001991">
    <property type="component" value="Chromosome"/>
</dbReference>
<dbReference type="GO" id="GO:0005737">
    <property type="term" value="C:cytoplasm"/>
    <property type="evidence" value="ECO:0007669"/>
    <property type="project" value="UniProtKB-SubCell"/>
</dbReference>
<dbReference type="GO" id="GO:0048476">
    <property type="term" value="C:Holliday junction resolvase complex"/>
    <property type="evidence" value="ECO:0007669"/>
    <property type="project" value="UniProtKB-UniRule"/>
</dbReference>
<dbReference type="GO" id="GO:0005524">
    <property type="term" value="F:ATP binding"/>
    <property type="evidence" value="ECO:0007669"/>
    <property type="project" value="UniProtKB-UniRule"/>
</dbReference>
<dbReference type="GO" id="GO:0016887">
    <property type="term" value="F:ATP hydrolysis activity"/>
    <property type="evidence" value="ECO:0007669"/>
    <property type="project" value="InterPro"/>
</dbReference>
<dbReference type="GO" id="GO:0000400">
    <property type="term" value="F:four-way junction DNA binding"/>
    <property type="evidence" value="ECO:0007669"/>
    <property type="project" value="UniProtKB-UniRule"/>
</dbReference>
<dbReference type="GO" id="GO:0009378">
    <property type="term" value="F:four-way junction helicase activity"/>
    <property type="evidence" value="ECO:0007669"/>
    <property type="project" value="InterPro"/>
</dbReference>
<dbReference type="GO" id="GO:0006310">
    <property type="term" value="P:DNA recombination"/>
    <property type="evidence" value="ECO:0007669"/>
    <property type="project" value="UniProtKB-UniRule"/>
</dbReference>
<dbReference type="GO" id="GO:0006281">
    <property type="term" value="P:DNA repair"/>
    <property type="evidence" value="ECO:0007669"/>
    <property type="project" value="UniProtKB-UniRule"/>
</dbReference>
<dbReference type="CDD" id="cd00009">
    <property type="entry name" value="AAA"/>
    <property type="match status" value="1"/>
</dbReference>
<dbReference type="Gene3D" id="1.10.8.60">
    <property type="match status" value="1"/>
</dbReference>
<dbReference type="Gene3D" id="3.40.50.300">
    <property type="entry name" value="P-loop containing nucleotide triphosphate hydrolases"/>
    <property type="match status" value="1"/>
</dbReference>
<dbReference type="Gene3D" id="1.10.10.10">
    <property type="entry name" value="Winged helix-like DNA-binding domain superfamily/Winged helix DNA-binding domain"/>
    <property type="match status" value="1"/>
</dbReference>
<dbReference type="HAMAP" id="MF_00016">
    <property type="entry name" value="DNA_HJ_migration_RuvB"/>
    <property type="match status" value="1"/>
</dbReference>
<dbReference type="InterPro" id="IPR003593">
    <property type="entry name" value="AAA+_ATPase"/>
</dbReference>
<dbReference type="InterPro" id="IPR041445">
    <property type="entry name" value="AAA_lid_4"/>
</dbReference>
<dbReference type="InterPro" id="IPR004605">
    <property type="entry name" value="DNA_helicase_Holl-junc_RuvB"/>
</dbReference>
<dbReference type="InterPro" id="IPR027417">
    <property type="entry name" value="P-loop_NTPase"/>
</dbReference>
<dbReference type="InterPro" id="IPR008824">
    <property type="entry name" value="RuvB-like_N"/>
</dbReference>
<dbReference type="InterPro" id="IPR008823">
    <property type="entry name" value="RuvB_C"/>
</dbReference>
<dbReference type="InterPro" id="IPR036388">
    <property type="entry name" value="WH-like_DNA-bd_sf"/>
</dbReference>
<dbReference type="InterPro" id="IPR036390">
    <property type="entry name" value="WH_DNA-bd_sf"/>
</dbReference>
<dbReference type="NCBIfam" id="NF000868">
    <property type="entry name" value="PRK00080.1"/>
    <property type="match status" value="1"/>
</dbReference>
<dbReference type="NCBIfam" id="TIGR00635">
    <property type="entry name" value="ruvB"/>
    <property type="match status" value="1"/>
</dbReference>
<dbReference type="PANTHER" id="PTHR42848">
    <property type="match status" value="1"/>
</dbReference>
<dbReference type="PANTHER" id="PTHR42848:SF1">
    <property type="entry name" value="HOLLIDAY JUNCTION BRANCH MIGRATION COMPLEX SUBUNIT RUVB"/>
    <property type="match status" value="1"/>
</dbReference>
<dbReference type="Pfam" id="PF17864">
    <property type="entry name" value="AAA_lid_4"/>
    <property type="match status" value="1"/>
</dbReference>
<dbReference type="Pfam" id="PF05491">
    <property type="entry name" value="RuvB_C"/>
    <property type="match status" value="1"/>
</dbReference>
<dbReference type="Pfam" id="PF05496">
    <property type="entry name" value="RuvB_N"/>
    <property type="match status" value="1"/>
</dbReference>
<dbReference type="SMART" id="SM00382">
    <property type="entry name" value="AAA"/>
    <property type="match status" value="1"/>
</dbReference>
<dbReference type="SUPFAM" id="SSF52540">
    <property type="entry name" value="P-loop containing nucleoside triphosphate hydrolases"/>
    <property type="match status" value="1"/>
</dbReference>
<dbReference type="SUPFAM" id="SSF46785">
    <property type="entry name" value="Winged helix' DNA-binding domain"/>
    <property type="match status" value="1"/>
</dbReference>
<evidence type="ECO:0000255" key="1">
    <source>
        <dbReference type="HAMAP-Rule" id="MF_00016"/>
    </source>
</evidence>
<evidence type="ECO:0000256" key="2">
    <source>
        <dbReference type="SAM" id="MobiDB-lite"/>
    </source>
</evidence>
<proteinExistence type="inferred from homology"/>
<organism>
    <name type="scientific">Limosilactobacillus reuteri (strain DSM 20016)</name>
    <name type="common">Lactobacillus reuteri</name>
    <dbReference type="NCBI Taxonomy" id="557436"/>
    <lineage>
        <taxon>Bacteria</taxon>
        <taxon>Bacillati</taxon>
        <taxon>Bacillota</taxon>
        <taxon>Bacilli</taxon>
        <taxon>Lactobacillales</taxon>
        <taxon>Lactobacillaceae</taxon>
        <taxon>Limosilactobacillus</taxon>
    </lineage>
</organism>
<name>RUVB_LIMRD</name>
<feature type="chain" id="PRO_0000322807" description="Holliday junction branch migration complex subunit RuvB">
    <location>
        <begin position="1"/>
        <end position="338"/>
    </location>
</feature>
<feature type="region of interest" description="Disordered" evidence="2">
    <location>
        <begin position="1"/>
        <end position="21"/>
    </location>
</feature>
<feature type="region of interest" description="Large ATPase domain (RuvB-L)" evidence="1">
    <location>
        <begin position="3"/>
        <end position="185"/>
    </location>
</feature>
<feature type="region of interest" description="Small ATPAse domain (RuvB-S)" evidence="1">
    <location>
        <begin position="186"/>
        <end position="256"/>
    </location>
</feature>
<feature type="region of interest" description="Head domain (RuvB-H)" evidence="1">
    <location>
        <begin position="259"/>
        <end position="338"/>
    </location>
</feature>
<feature type="compositionally biased region" description="Basic and acidic residues" evidence="2">
    <location>
        <begin position="1"/>
        <end position="14"/>
    </location>
</feature>
<feature type="binding site" evidence="1">
    <location>
        <position position="24"/>
    </location>
    <ligand>
        <name>ATP</name>
        <dbReference type="ChEBI" id="CHEBI:30616"/>
    </ligand>
</feature>
<feature type="binding site" evidence="1">
    <location>
        <position position="25"/>
    </location>
    <ligand>
        <name>ATP</name>
        <dbReference type="ChEBI" id="CHEBI:30616"/>
    </ligand>
</feature>
<feature type="binding site" evidence="1">
    <location>
        <position position="66"/>
    </location>
    <ligand>
        <name>ATP</name>
        <dbReference type="ChEBI" id="CHEBI:30616"/>
    </ligand>
</feature>
<feature type="binding site" evidence="1">
    <location>
        <position position="69"/>
    </location>
    <ligand>
        <name>ATP</name>
        <dbReference type="ChEBI" id="CHEBI:30616"/>
    </ligand>
</feature>
<feature type="binding site" evidence="1">
    <location>
        <position position="70"/>
    </location>
    <ligand>
        <name>ATP</name>
        <dbReference type="ChEBI" id="CHEBI:30616"/>
    </ligand>
</feature>
<feature type="binding site" evidence="1">
    <location>
        <position position="70"/>
    </location>
    <ligand>
        <name>Mg(2+)</name>
        <dbReference type="ChEBI" id="CHEBI:18420"/>
    </ligand>
</feature>
<feature type="binding site" evidence="1">
    <location>
        <position position="71"/>
    </location>
    <ligand>
        <name>ATP</name>
        <dbReference type="ChEBI" id="CHEBI:30616"/>
    </ligand>
</feature>
<feature type="binding site" evidence="1">
    <location>
        <begin position="132"/>
        <end position="134"/>
    </location>
    <ligand>
        <name>ATP</name>
        <dbReference type="ChEBI" id="CHEBI:30616"/>
    </ligand>
</feature>
<feature type="binding site" evidence="1">
    <location>
        <position position="175"/>
    </location>
    <ligand>
        <name>ATP</name>
        <dbReference type="ChEBI" id="CHEBI:30616"/>
    </ligand>
</feature>
<feature type="binding site" evidence="1">
    <location>
        <position position="185"/>
    </location>
    <ligand>
        <name>ATP</name>
        <dbReference type="ChEBI" id="CHEBI:30616"/>
    </ligand>
</feature>
<feature type="binding site" evidence="1">
    <location>
        <position position="222"/>
    </location>
    <ligand>
        <name>ATP</name>
        <dbReference type="ChEBI" id="CHEBI:30616"/>
    </ligand>
</feature>
<feature type="binding site" evidence="1">
    <location>
        <position position="314"/>
    </location>
    <ligand>
        <name>DNA</name>
        <dbReference type="ChEBI" id="CHEBI:16991"/>
    </ligand>
</feature>
<feature type="binding site" evidence="1">
    <location>
        <position position="319"/>
    </location>
    <ligand>
        <name>DNA</name>
        <dbReference type="ChEBI" id="CHEBI:16991"/>
    </ligand>
</feature>